<accession>Q1JP05</accession>
<feature type="chain" id="PRO_1000052840" description="Large ribosomal subunit protein uL5">
    <location>
        <begin position="1"/>
        <end position="180"/>
    </location>
</feature>
<sequence length="180" mass="19815">MANRLKEKYTNEVIPALTEKFNYTSVMAVPKVEKIVLNMGVGDAVSNAKNLEKAAAELALISGQKPLITKAKKSIAGFRLREGVAIGAKVTLRGERMYEFLDKLVSVSLPRVRDFHGVPTKSFDGRGNYTLGVKEQLIFPEISFDDVDKVRGLDIVIVTTANTDEESRELLKGLGMPFAK</sequence>
<keyword id="KW-0687">Ribonucleoprotein</keyword>
<keyword id="KW-0689">Ribosomal protein</keyword>
<keyword id="KW-0694">RNA-binding</keyword>
<keyword id="KW-0699">rRNA-binding</keyword>
<keyword id="KW-0820">tRNA-binding</keyword>
<evidence type="ECO:0000255" key="1">
    <source>
        <dbReference type="HAMAP-Rule" id="MF_01333"/>
    </source>
</evidence>
<evidence type="ECO:0000305" key="2"/>
<reference key="1">
    <citation type="journal article" date="2006" name="Proc. Natl. Acad. Sci. U.S.A.">
        <title>Molecular genetic anatomy of inter- and intraserotype variation in the human bacterial pathogen group A Streptococcus.</title>
        <authorList>
            <person name="Beres S.B."/>
            <person name="Richter E.W."/>
            <person name="Nagiec M.J."/>
            <person name="Sumby P."/>
            <person name="Porcella S.F."/>
            <person name="DeLeo F.R."/>
            <person name="Musser J.M."/>
        </authorList>
    </citation>
    <scope>NUCLEOTIDE SEQUENCE [LARGE SCALE GENOMIC DNA]</scope>
    <source>
        <strain>MGAS9429</strain>
    </source>
</reference>
<gene>
    <name evidence="1" type="primary">rplE</name>
    <name type="ordered locus">MGAS9429_Spy0056</name>
</gene>
<name>RL5_STRPC</name>
<dbReference type="EMBL" id="CP000259">
    <property type="protein sequence ID" value="ABF31244.1"/>
    <property type="molecule type" value="Genomic_DNA"/>
</dbReference>
<dbReference type="RefSeq" id="WP_002986634.1">
    <property type="nucleotide sequence ID" value="NC_008021.1"/>
</dbReference>
<dbReference type="SMR" id="Q1JP05"/>
<dbReference type="GeneID" id="69900038"/>
<dbReference type="KEGG" id="spk:MGAS9429_Spy0056"/>
<dbReference type="HOGENOM" id="CLU_061015_2_1_9"/>
<dbReference type="Proteomes" id="UP000002433">
    <property type="component" value="Chromosome"/>
</dbReference>
<dbReference type="GO" id="GO:1990904">
    <property type="term" value="C:ribonucleoprotein complex"/>
    <property type="evidence" value="ECO:0007669"/>
    <property type="project" value="UniProtKB-KW"/>
</dbReference>
<dbReference type="GO" id="GO:0005840">
    <property type="term" value="C:ribosome"/>
    <property type="evidence" value="ECO:0007669"/>
    <property type="project" value="UniProtKB-KW"/>
</dbReference>
<dbReference type="GO" id="GO:0019843">
    <property type="term" value="F:rRNA binding"/>
    <property type="evidence" value="ECO:0007669"/>
    <property type="project" value="UniProtKB-UniRule"/>
</dbReference>
<dbReference type="GO" id="GO:0003735">
    <property type="term" value="F:structural constituent of ribosome"/>
    <property type="evidence" value="ECO:0007669"/>
    <property type="project" value="InterPro"/>
</dbReference>
<dbReference type="GO" id="GO:0000049">
    <property type="term" value="F:tRNA binding"/>
    <property type="evidence" value="ECO:0007669"/>
    <property type="project" value="UniProtKB-UniRule"/>
</dbReference>
<dbReference type="GO" id="GO:0006412">
    <property type="term" value="P:translation"/>
    <property type="evidence" value="ECO:0007669"/>
    <property type="project" value="UniProtKB-UniRule"/>
</dbReference>
<dbReference type="FunFam" id="3.30.1440.10:FF:000001">
    <property type="entry name" value="50S ribosomal protein L5"/>
    <property type="match status" value="1"/>
</dbReference>
<dbReference type="Gene3D" id="3.30.1440.10">
    <property type="match status" value="1"/>
</dbReference>
<dbReference type="HAMAP" id="MF_01333_B">
    <property type="entry name" value="Ribosomal_uL5_B"/>
    <property type="match status" value="1"/>
</dbReference>
<dbReference type="InterPro" id="IPR002132">
    <property type="entry name" value="Ribosomal_uL5"/>
</dbReference>
<dbReference type="InterPro" id="IPR020930">
    <property type="entry name" value="Ribosomal_uL5_bac-type"/>
</dbReference>
<dbReference type="InterPro" id="IPR031309">
    <property type="entry name" value="Ribosomal_uL5_C"/>
</dbReference>
<dbReference type="InterPro" id="IPR020929">
    <property type="entry name" value="Ribosomal_uL5_CS"/>
</dbReference>
<dbReference type="InterPro" id="IPR022803">
    <property type="entry name" value="Ribosomal_uL5_dom_sf"/>
</dbReference>
<dbReference type="InterPro" id="IPR031310">
    <property type="entry name" value="Ribosomal_uL5_N"/>
</dbReference>
<dbReference type="NCBIfam" id="NF000585">
    <property type="entry name" value="PRK00010.1"/>
    <property type="match status" value="1"/>
</dbReference>
<dbReference type="PANTHER" id="PTHR11994">
    <property type="entry name" value="60S RIBOSOMAL PROTEIN L11-RELATED"/>
    <property type="match status" value="1"/>
</dbReference>
<dbReference type="Pfam" id="PF00281">
    <property type="entry name" value="Ribosomal_L5"/>
    <property type="match status" value="1"/>
</dbReference>
<dbReference type="Pfam" id="PF00673">
    <property type="entry name" value="Ribosomal_L5_C"/>
    <property type="match status" value="1"/>
</dbReference>
<dbReference type="PIRSF" id="PIRSF002161">
    <property type="entry name" value="Ribosomal_L5"/>
    <property type="match status" value="1"/>
</dbReference>
<dbReference type="SUPFAM" id="SSF55282">
    <property type="entry name" value="RL5-like"/>
    <property type="match status" value="1"/>
</dbReference>
<dbReference type="PROSITE" id="PS00358">
    <property type="entry name" value="RIBOSOMAL_L5"/>
    <property type="match status" value="1"/>
</dbReference>
<protein>
    <recommendedName>
        <fullName evidence="1">Large ribosomal subunit protein uL5</fullName>
    </recommendedName>
    <alternativeName>
        <fullName evidence="2">50S ribosomal protein L5</fullName>
    </alternativeName>
</protein>
<comment type="function">
    <text evidence="1">This is one of the proteins that bind and probably mediate the attachment of the 5S RNA into the large ribosomal subunit, where it forms part of the central protuberance. In the 70S ribosome it contacts protein S13 of the 30S subunit (bridge B1b), connecting the 2 subunits; this bridge is implicated in subunit movement. Contacts the P site tRNA; the 5S rRNA and some of its associated proteins might help stabilize positioning of ribosome-bound tRNAs.</text>
</comment>
<comment type="subunit">
    <text evidence="1">Part of the 50S ribosomal subunit; part of the 5S rRNA/L5/L18/L25 subcomplex. Contacts the 5S rRNA and the P site tRNA. Forms a bridge to the 30S subunit in the 70S ribosome.</text>
</comment>
<comment type="similarity">
    <text evidence="1">Belongs to the universal ribosomal protein uL5 family.</text>
</comment>
<organism>
    <name type="scientific">Streptococcus pyogenes serotype M12 (strain MGAS9429)</name>
    <dbReference type="NCBI Taxonomy" id="370551"/>
    <lineage>
        <taxon>Bacteria</taxon>
        <taxon>Bacillati</taxon>
        <taxon>Bacillota</taxon>
        <taxon>Bacilli</taxon>
        <taxon>Lactobacillales</taxon>
        <taxon>Streptococcaceae</taxon>
        <taxon>Streptococcus</taxon>
    </lineage>
</organism>
<proteinExistence type="inferred from homology"/>